<sequence length="94" mass="10838">MLYLIIYDVPATKAGNKRRTRLFDLLSGYGKWRQFSVFECFLSVKQFAKLQTAMEKLIKLDEDAVCIYVLDENTVQRTITYGTPQPEKPGSIII</sequence>
<name>CAS2A_SYNY3</name>
<keyword id="KW-0002">3D-structure</keyword>
<keyword id="KW-0051">Antiviral defense</keyword>
<keyword id="KW-0255">Endonuclease</keyword>
<keyword id="KW-0378">Hydrolase</keyword>
<keyword id="KW-0460">Magnesium</keyword>
<keyword id="KW-0479">Metal-binding</keyword>
<keyword id="KW-0540">Nuclease</keyword>
<keyword id="KW-0614">Plasmid</keyword>
<keyword id="KW-1185">Reference proteome</keyword>
<geneLocation type="plasmid">
    <name>pSYSA</name>
</geneLocation>
<gene>
    <name evidence="1" type="primary">cas2-1</name>
    <name type="ordered locus">ssr7017</name>
</gene>
<comment type="function">
    <text evidence="1">CRISPR (clustered regularly interspaced short palindromic repeat), is an adaptive immune system that provides protection against mobile genetic elements (viruses, transposable elements and conjugative plasmids). CRISPR clusters contain sequences complementary to antecedent mobile elements and target invading nucleic acids. CRISPR clusters are transcribed and processed into CRISPR RNA (crRNA). Functions as a ssRNA-specific endoribonuclease. Involved in the integration of spacer DNA into the CRISPR cassette.</text>
</comment>
<comment type="cofactor">
    <cofactor evidence="1">
        <name>Mg(2+)</name>
        <dbReference type="ChEBI" id="CHEBI:18420"/>
    </cofactor>
</comment>
<comment type="subunit">
    <text evidence="1">Homodimer, forms a heterotetramer with a Cas1 homodimer.</text>
</comment>
<comment type="similarity">
    <text evidence="1">Belongs to the CRISPR-associated endoribonuclease Cas2 protein family.</text>
</comment>
<organism>
    <name type="scientific">Synechocystis sp. (strain ATCC 27184 / PCC 6803 / Kazusa)</name>
    <dbReference type="NCBI Taxonomy" id="1111708"/>
    <lineage>
        <taxon>Bacteria</taxon>
        <taxon>Bacillati</taxon>
        <taxon>Cyanobacteriota</taxon>
        <taxon>Cyanophyceae</taxon>
        <taxon>Synechococcales</taxon>
        <taxon>Merismopediaceae</taxon>
        <taxon>Synechocystis</taxon>
    </lineage>
</organism>
<dbReference type="EC" id="3.1.-.-" evidence="1"/>
<dbReference type="EMBL" id="AP004311">
    <property type="protein sequence ID" value="BAD01919.1"/>
    <property type="molecule type" value="Genomic_DNA"/>
</dbReference>
<dbReference type="PDB" id="7CR6">
    <property type="method" value="X-ray"/>
    <property type="resolution" value="3.72 A"/>
    <property type="chains" value="E/F=1-94"/>
</dbReference>
<dbReference type="PDB" id="7CR8">
    <property type="method" value="X-ray"/>
    <property type="resolution" value="3.70 A"/>
    <property type="chains" value="E/F/M/N/U/V/e/f/m/n/u/v=1-94"/>
</dbReference>
<dbReference type="PDBsum" id="7CR6"/>
<dbReference type="PDBsum" id="7CR8"/>
<dbReference type="SMR" id="Q6ZEI1"/>
<dbReference type="EnsemblBacteria" id="BAD01919">
    <property type="protein sequence ID" value="BAD01919"/>
    <property type="gene ID" value="BAD01919"/>
</dbReference>
<dbReference type="KEGG" id="syn:ssr7017"/>
<dbReference type="InParanoid" id="Q6ZEI1"/>
<dbReference type="PhylomeDB" id="Q6ZEI1"/>
<dbReference type="Proteomes" id="UP000001425">
    <property type="component" value="Plasmid pSYSA"/>
</dbReference>
<dbReference type="GO" id="GO:0046872">
    <property type="term" value="F:metal ion binding"/>
    <property type="evidence" value="ECO:0007669"/>
    <property type="project" value="UniProtKB-UniRule"/>
</dbReference>
<dbReference type="GO" id="GO:0004521">
    <property type="term" value="F:RNA endonuclease activity"/>
    <property type="evidence" value="ECO:0007669"/>
    <property type="project" value="InterPro"/>
</dbReference>
<dbReference type="GO" id="GO:0051607">
    <property type="term" value="P:defense response to virus"/>
    <property type="evidence" value="ECO:0007669"/>
    <property type="project" value="UniProtKB-UniRule"/>
</dbReference>
<dbReference type="GO" id="GO:0043571">
    <property type="term" value="P:maintenance of CRISPR repeat elements"/>
    <property type="evidence" value="ECO:0007669"/>
    <property type="project" value="UniProtKB-UniRule"/>
</dbReference>
<dbReference type="CDD" id="cd09725">
    <property type="entry name" value="Cas2_I_II_III"/>
    <property type="match status" value="1"/>
</dbReference>
<dbReference type="Gene3D" id="3.30.70.240">
    <property type="match status" value="1"/>
</dbReference>
<dbReference type="HAMAP" id="MF_01471">
    <property type="entry name" value="Cas2"/>
    <property type="match status" value="1"/>
</dbReference>
<dbReference type="InterPro" id="IPR021127">
    <property type="entry name" value="CRISPR_associated_Cas2"/>
</dbReference>
<dbReference type="InterPro" id="IPR019199">
    <property type="entry name" value="Virulence_VapD/CRISPR_Cas2"/>
</dbReference>
<dbReference type="NCBIfam" id="TIGR01573">
    <property type="entry name" value="cas2"/>
    <property type="match status" value="1"/>
</dbReference>
<dbReference type="PANTHER" id="PTHR34405">
    <property type="entry name" value="CRISPR-ASSOCIATED ENDORIBONUCLEASE CAS2"/>
    <property type="match status" value="1"/>
</dbReference>
<dbReference type="PANTHER" id="PTHR34405:SF3">
    <property type="entry name" value="CRISPR-ASSOCIATED ENDORIBONUCLEASE CAS2 3"/>
    <property type="match status" value="1"/>
</dbReference>
<dbReference type="Pfam" id="PF09827">
    <property type="entry name" value="CRISPR_Cas2"/>
    <property type="match status" value="1"/>
</dbReference>
<dbReference type="PIRSF" id="PIRSF032582">
    <property type="entry name" value="Cas2"/>
    <property type="match status" value="1"/>
</dbReference>
<dbReference type="SUPFAM" id="SSF143430">
    <property type="entry name" value="TTP0101/SSO1404-like"/>
    <property type="match status" value="1"/>
</dbReference>
<proteinExistence type="evidence at protein level"/>
<reference key="1">
    <citation type="journal article" date="2003" name="DNA Res.">
        <title>Structural analysis of four large plasmids harboring in a unicellular cyanobacterium, Synechocystis sp. PCC 6803.</title>
        <authorList>
            <person name="Kaneko T."/>
            <person name="Nakamura Y."/>
            <person name="Sasamoto S."/>
            <person name="Watanabe A."/>
            <person name="Kohara M."/>
            <person name="Matsumoto M."/>
            <person name="Shimpo S."/>
            <person name="Yamada M."/>
            <person name="Tabata S."/>
        </authorList>
    </citation>
    <scope>NUCLEOTIDE SEQUENCE [LARGE SCALE GENOMIC DNA]</scope>
    <source>
        <strain>ATCC 27184 / PCC 6803 / Kazusa</strain>
    </source>
</reference>
<feature type="chain" id="PRO_0000417733" description="CRISPR-associated endoribonuclease Cas2 1">
    <location>
        <begin position="1"/>
        <end position="94"/>
    </location>
</feature>
<feature type="binding site" evidence="1">
    <location>
        <position position="8"/>
    </location>
    <ligand>
        <name>Mg(2+)</name>
        <dbReference type="ChEBI" id="CHEBI:18420"/>
        <note>catalytic</note>
    </ligand>
</feature>
<accession>Q6ZEI1</accession>
<protein>
    <recommendedName>
        <fullName evidence="1">CRISPR-associated endoribonuclease Cas2 1</fullName>
        <ecNumber evidence="1">3.1.-.-</ecNumber>
    </recommendedName>
</protein>
<evidence type="ECO:0000255" key="1">
    <source>
        <dbReference type="HAMAP-Rule" id="MF_01471"/>
    </source>
</evidence>